<reference key="1">
    <citation type="journal article" date="1999" name="Virus Res.">
        <title>Molecular analysis of barley yellow mosaic virus isolates from China.</title>
        <authorList>
            <person name="Chen J."/>
            <person name="Shi N."/>
            <person name="Chen Y."/>
            <person name="Diao A."/>
            <person name="Chen D."/>
            <person name="Wilson M.A."/>
            <person name="Antoniw J.F."/>
            <person name="Adams M.J."/>
        </authorList>
    </citation>
    <scope>NUCLEOTIDE SEQUENCE [GENOMIC RNA]</scope>
</reference>
<protein>
    <recommendedName>
        <fullName>Genome polyprotein 1</fullName>
    </recommendedName>
    <component>
        <recommendedName>
            <fullName>Protein P3</fullName>
        </recommendedName>
    </component>
    <component>
        <recommendedName>
            <fullName>6 kDa protein 1</fullName>
            <shortName>6K1</shortName>
        </recommendedName>
    </component>
    <component>
        <recommendedName>
            <fullName>Cytoplasmic inclusion protein</fullName>
            <shortName>CI</shortName>
            <ecNumber>3.6.4.-</ecNumber>
        </recommendedName>
    </component>
    <component>
        <recommendedName>
            <fullName>6 kDa protein 2</fullName>
            <shortName>6K2</shortName>
        </recommendedName>
    </component>
    <component>
        <recommendedName>
            <fullName>Viral genome-linked protein</fullName>
        </recommendedName>
        <alternativeName>
            <fullName>VPg</fullName>
        </alternativeName>
    </component>
    <component>
        <recommendedName>
            <fullName>Nuclear inclusion protein A</fullName>
            <shortName>NI-a</shortName>
            <shortName>NIa</shortName>
            <ecNumber>3.4.22.44</ecNumber>
        </recommendedName>
        <alternativeName>
            <fullName>NIa-pro</fullName>
        </alternativeName>
    </component>
    <component>
        <recommendedName>
            <fullName>Nuclear inclusion protein B</fullName>
            <shortName>NI-b</shortName>
            <shortName>NIb</shortName>
            <ecNumber>2.7.7.48</ecNumber>
        </recommendedName>
        <alternativeName>
            <fullName>RNA-directed RNA polymerase</fullName>
        </alternativeName>
    </component>
    <component>
        <recommendedName>
            <fullName>Capsid protein</fullName>
            <shortName>CP</shortName>
        </recommendedName>
        <alternativeName>
            <fullName>Coat protein</fullName>
        </alternativeName>
    </component>
</protein>
<organismHost>
    <name type="scientific">Hordeum vulgare</name>
    <name type="common">Barley</name>
    <dbReference type="NCBI Taxonomy" id="4513"/>
</organismHost>
<dbReference type="EC" id="3.6.4.-"/>
<dbReference type="EC" id="3.4.22.44"/>
<dbReference type="EC" id="2.7.7.48"/>
<dbReference type="EMBL" id="AJ132268">
    <property type="protein sequence ID" value="CAA10637.1"/>
    <property type="molecule type" value="Genomic_RNA"/>
</dbReference>
<dbReference type="RefSeq" id="NP_148999.1">
    <property type="nucleotide sequence ID" value="NC_002990.1"/>
</dbReference>
<dbReference type="SMR" id="Q9YJW3"/>
<dbReference type="GeneID" id="963861"/>
<dbReference type="KEGG" id="vg:963861"/>
<dbReference type="Proteomes" id="UP000006704">
    <property type="component" value="Genome"/>
</dbReference>
<dbReference type="GO" id="GO:0019029">
    <property type="term" value="C:helical viral capsid"/>
    <property type="evidence" value="ECO:0007669"/>
    <property type="project" value="UniProtKB-KW"/>
</dbReference>
<dbReference type="GO" id="GO:0044161">
    <property type="term" value="C:host cell cytoplasmic vesicle"/>
    <property type="evidence" value="ECO:0007669"/>
    <property type="project" value="UniProtKB-SubCell"/>
</dbReference>
<dbReference type="GO" id="GO:0005524">
    <property type="term" value="F:ATP binding"/>
    <property type="evidence" value="ECO:0007669"/>
    <property type="project" value="UniProtKB-KW"/>
</dbReference>
<dbReference type="GO" id="GO:0008234">
    <property type="term" value="F:cysteine-type peptidase activity"/>
    <property type="evidence" value="ECO:0007669"/>
    <property type="project" value="InterPro"/>
</dbReference>
<dbReference type="GO" id="GO:0004386">
    <property type="term" value="F:helicase activity"/>
    <property type="evidence" value="ECO:0007669"/>
    <property type="project" value="UniProtKB-KW"/>
</dbReference>
<dbReference type="GO" id="GO:0016818">
    <property type="term" value="F:hydrolase activity, acting on acid anhydrides, in phosphorus-containing anhydrides"/>
    <property type="evidence" value="ECO:0007669"/>
    <property type="project" value="InterPro"/>
</dbReference>
<dbReference type="GO" id="GO:0003723">
    <property type="term" value="F:RNA binding"/>
    <property type="evidence" value="ECO:0007669"/>
    <property type="project" value="InterPro"/>
</dbReference>
<dbReference type="GO" id="GO:0003968">
    <property type="term" value="F:RNA-directed RNA polymerase activity"/>
    <property type="evidence" value="ECO:0007669"/>
    <property type="project" value="UniProtKB-KW"/>
</dbReference>
<dbReference type="GO" id="GO:0005198">
    <property type="term" value="F:structural molecule activity"/>
    <property type="evidence" value="ECO:0007669"/>
    <property type="project" value="InterPro"/>
</dbReference>
<dbReference type="GO" id="GO:0006351">
    <property type="term" value="P:DNA-templated transcription"/>
    <property type="evidence" value="ECO:0007669"/>
    <property type="project" value="InterPro"/>
</dbReference>
<dbReference type="GO" id="GO:0006508">
    <property type="term" value="P:proteolysis"/>
    <property type="evidence" value="ECO:0007669"/>
    <property type="project" value="InterPro"/>
</dbReference>
<dbReference type="GO" id="GO:0039694">
    <property type="term" value="P:viral RNA genome replication"/>
    <property type="evidence" value="ECO:0007669"/>
    <property type="project" value="InterPro"/>
</dbReference>
<dbReference type="CDD" id="cd23175">
    <property type="entry name" value="ps-ssRNAv_Potyviridae_RdRp"/>
    <property type="match status" value="1"/>
</dbReference>
<dbReference type="Gene3D" id="3.30.70.270">
    <property type="match status" value="1"/>
</dbReference>
<dbReference type="Gene3D" id="3.40.50.300">
    <property type="entry name" value="P-loop containing nucleotide triphosphate hydrolases"/>
    <property type="match status" value="2"/>
</dbReference>
<dbReference type="Gene3D" id="2.40.10.10">
    <property type="entry name" value="Trypsin-like serine proteases"/>
    <property type="match status" value="1"/>
</dbReference>
<dbReference type="InterPro" id="IPR011545">
    <property type="entry name" value="DEAD/DEAH_box_helicase_dom"/>
</dbReference>
<dbReference type="InterPro" id="IPR043502">
    <property type="entry name" value="DNA/RNA_pol_sf"/>
</dbReference>
<dbReference type="InterPro" id="IPR014001">
    <property type="entry name" value="Helicase_ATP-bd"/>
</dbReference>
<dbReference type="InterPro" id="IPR027417">
    <property type="entry name" value="P-loop_NTPase"/>
</dbReference>
<dbReference type="InterPro" id="IPR009003">
    <property type="entry name" value="Peptidase_S1_PA"/>
</dbReference>
<dbReference type="InterPro" id="IPR043504">
    <property type="entry name" value="Peptidase_S1_PA_chymotrypsin"/>
</dbReference>
<dbReference type="InterPro" id="IPR001592">
    <property type="entry name" value="Poty_coat"/>
</dbReference>
<dbReference type="InterPro" id="IPR001730">
    <property type="entry name" value="Potyv_NIa-pro_dom"/>
</dbReference>
<dbReference type="InterPro" id="IPR013648">
    <property type="entry name" value="PP_Potyviridae"/>
</dbReference>
<dbReference type="InterPro" id="IPR043128">
    <property type="entry name" value="Rev_trsase/Diguanyl_cyclase"/>
</dbReference>
<dbReference type="InterPro" id="IPR001205">
    <property type="entry name" value="RNA-dir_pol_C"/>
</dbReference>
<dbReference type="InterPro" id="IPR007094">
    <property type="entry name" value="RNA-dir_pol_PSvirus"/>
</dbReference>
<dbReference type="PANTHER" id="PTHR18934">
    <property type="entry name" value="ATP-DEPENDENT RNA HELICASE"/>
    <property type="match status" value="1"/>
</dbReference>
<dbReference type="PANTHER" id="PTHR18934:SF99">
    <property type="entry name" value="ATP-DEPENDENT RNA HELICASE DHX37-RELATED"/>
    <property type="match status" value="1"/>
</dbReference>
<dbReference type="Pfam" id="PF00270">
    <property type="entry name" value="DEAD"/>
    <property type="match status" value="1"/>
</dbReference>
<dbReference type="Pfam" id="PF00863">
    <property type="entry name" value="Peptidase_C4"/>
    <property type="match status" value="1"/>
</dbReference>
<dbReference type="Pfam" id="PF00767">
    <property type="entry name" value="Poty_coat"/>
    <property type="match status" value="1"/>
</dbReference>
<dbReference type="Pfam" id="PF08440">
    <property type="entry name" value="Poty_PP"/>
    <property type="match status" value="1"/>
</dbReference>
<dbReference type="Pfam" id="PF00680">
    <property type="entry name" value="RdRP_1"/>
    <property type="match status" value="1"/>
</dbReference>
<dbReference type="SMART" id="SM00487">
    <property type="entry name" value="DEXDc"/>
    <property type="match status" value="1"/>
</dbReference>
<dbReference type="SUPFAM" id="SSF56672">
    <property type="entry name" value="DNA/RNA polymerases"/>
    <property type="match status" value="1"/>
</dbReference>
<dbReference type="SUPFAM" id="SSF52540">
    <property type="entry name" value="P-loop containing nucleoside triphosphate hydrolases"/>
    <property type="match status" value="1"/>
</dbReference>
<dbReference type="SUPFAM" id="SSF50494">
    <property type="entry name" value="Trypsin-like serine proteases"/>
    <property type="match status" value="1"/>
</dbReference>
<dbReference type="PROSITE" id="PS51192">
    <property type="entry name" value="HELICASE_ATP_BIND_1"/>
    <property type="match status" value="1"/>
</dbReference>
<dbReference type="PROSITE" id="PS51194">
    <property type="entry name" value="HELICASE_CTER"/>
    <property type="match status" value="1"/>
</dbReference>
<dbReference type="PROSITE" id="PS51436">
    <property type="entry name" value="POTYVIRUS_NIA_PRO"/>
    <property type="match status" value="1"/>
</dbReference>
<dbReference type="PROSITE" id="PS50507">
    <property type="entry name" value="RDRP_SSRNA_POS"/>
    <property type="match status" value="1"/>
</dbReference>
<accession>Q9YJW3</accession>
<name>POL1_BAYMY</name>
<sequence>MEQTLAQAVSRRNKTDTPMAEERKHFSPMNFSANFVAPELFYSANVRKIKNIFKERSTTRFLDAISSDFELVAFLTLSPAHLMQLETVLRQEMRSCAVPIVTSDASFETVAVIKTALDGMRFHFGYTTLEKGWISMMRHAESCLQESSSSAVNDLQTPIKRVGSLLLSGKNRVEGCELSVLNLTARRFRIEYGLNGTYFGEHVAMLRDLKRYIYGTVPKEFLWAKTKKHLPFTIPAWITRTPIDCFLFCLRVIPILHRFGVAMSLIYFSCVAALNFPAFMGFLFKRQFAKYLAHSFAKHSIYFMFLTIVAILWSFRTFTSQKPKIVLQARSTAEKEKKLMMILASVVGITYLFDYDIAEALGNCLHKISRLSSYLLDDHQGIASRMFGASYGLQAGDSAEDAVTTIISDLLSVTFKIVDEDASQGTVEDASETTFHSWVGVNTLAGRNMSRPLQYSVNKTYALTPQNVQLQARAMADANNCWSMVVGHTGSGKSTYLPVQYSNYLSTKSDRRQQILICEPTQAATENVCAGVAANLGRAVYGRHEGWSRMGDHCIQVMTYGSALQCHAMDPSFISTFDAIFLDEAHDVKEHSLVFESICDTFKSVRKFYVSATPRDGSVCPEAARKYPLHVETSVCDSYRKFIAAQGGGDLLDISKHDTALVFLAGRPECIKAANAWNASVTGEKRAFSLSSDNFATDFSMLTERLKTHKTIIFTTNIIETGVTLSVDCVVDFGHTMRPCLDLNQKSLRLDRRKVTRNERQQRIGPTGRLKDGYAIVCGDVDRAVNVISPDVLYGAALLSFKHNVPFYMNETFESSWLKGVTKAQADTMTIFKLPIFLTRDLINADGSVAKEFLDVLKKHQFTTSDIKQAPSITAKHIFPTWASYFSLHQALHYGDDKDEIPHELRYARVPFSVTTLSKFDWPALALACEKHRASMSNVFAGIEEPARVVTLQTNPANIQASITHLMHMSKNYKTLIENNQHVRQSMMTNVMYKWFSSTRITKDLDRNLRRCTDNLAVVEATLSSLRQILAGNTQVHATPHMQSTLEDIIGLQASDTLTEESLASALGIFVPKSNLFLLLATKGFKLVYVICILLLVNLVYIGLRKWREHLKQKGSDEILTNTMPVSEGGEILAEVMKMEPKMRKNIKRDMDEAVESKLCGFTFVFPDDDKIGLEGKGNKYRPREDARLMYSTREDATFDAWNEKAKERRKKVTDKSEPELRRAYEKRPYFNFYDLQTDSNILEAIFYTTEGDEFFRTADPNKDMNLVADKLRSFLDTKLVVGHHQRKLLEETAQVVIKDTKGTAHKMEISQHDPDCLKQNGSGKVGYPEHRGQFRQEGVAITSDYDLGVEFGTDTDNITLEASTGILLSQVGVDVATRVGRISIGTFNMNCYFYNDWILVPGHLQDRSGNVTIQFPDQTVQTTTDALNANGVKRFYGLDVIAIRRPAILRPRTKLVKAFAIEEPVIAQMVFVDAQGVRKFTQSDWARKGENSGRWSHKISTVLGMCGCQFWTLERQIDGIHVATNYTKKRNEFQPFTQEVVDFINGPGTKIPYCPWVFDRPACGYASHTALFEKPTTLTDVIHMQASDGLHNINNAIEGFGSSLRGQLVSPPTESTRQRFDKLFGSGSFELIGQMNKGLIDKHVIVGENDDVYDFMREHPTFTWLKDFMNEYAPSVLSYSAYYKDLCKYNRAKHVLTYNPEELHYATKGLIKMLEDAGLTQGSVRTPQQVISDIQWNTSAGPSYQGKKRDLCAHLSDDEVLHLAEVCRQQFLEGKSTGVWNGSLKAELRTIEKVEPEKTRVFTASPITSLFAMKFYVDDFNKKFYATNLKAPHTVGINKFGRGWERLHDKLNRPGWLHGSGDGSRFDSSIDPFFFDVVKTIRKHFLPSEHHKAIDLIYDEILNTTICLANGMVIKKNVGTQRQPSTVVDNTLVLMTAFLYAYIHKTGDRELALLNERFIFVCNGDDNKFAISPQFDEEFGHDFSPELVELGLTYEFDDITSDICENPYMSLTMVKTPFGVGFSLPVERIIAIMQWSKKGGVLHSYLAGISAIYESFNTPKLFKSIYAYLLWLTEEHEAEILAAMTQSSTALPIPSMLDVYRLHYGDDEIWLQAADPLTDAQKEAAHTAAADRARLDLADADRRRKVEADRVEAARVKKAADAALKPVNLTATRMPTEDDGKLKTPSGARIPSSAADGNWSVPATKQVNAGLTLKIPLNKLKSVPKSVMEHNNSVALESELKAWTDAVRTSLGITTDEAWIDALIPFIGWCCNNGTSDKHAENQVMQIDSGKGAVTEMSLSPFIVHARMNGGLRRIMRNYSDETVLLITNNKLVAHWSMKHGASANAKYAFDFFVPRSWMNPQDIEVSKQARLAALGTGTYNTMLTSDTTNLRKTTNHRVLDSDGHPELT</sequence>
<organism>
    <name type="scientific">Barley yellow mosaic virus (isolate China/Yancheng/1998)</name>
    <name type="common">BaYMV</name>
    <dbReference type="NCBI Taxonomy" id="652104"/>
    <lineage>
        <taxon>Viruses</taxon>
        <taxon>Riboviria</taxon>
        <taxon>Orthornavirae</taxon>
        <taxon>Pisuviricota</taxon>
        <taxon>Stelpaviricetes</taxon>
        <taxon>Patatavirales</taxon>
        <taxon>Potyviridae</taxon>
        <taxon>Bymovirus</taxon>
        <taxon>Barley yellow mosaic virus</taxon>
    </lineage>
</organism>
<comment type="function">
    <molecule>6 kDa protein 1</molecule>
    <text evidence="3">Indispensable for virus replication.</text>
</comment>
<comment type="function">
    <molecule>6 kDa protein 2</molecule>
    <text evidence="2">Indispensable for virus replication.</text>
</comment>
<comment type="function">
    <molecule>Viral genome-linked protein</molecule>
    <text evidence="4">Mediates the cap-independent, EIF4E-dependent translation of viral genomic RNAs (By similarity). Binds to the cap-binding site of host EIF4E and thus interferes with the host EIF4E-dependent mRNA export and translation (By similarity). VPg-RNA directly binds EIF4E and is a template for transcription (By similarity). Also forms trimeric complexes with EIF4E-EIF4G, which are templates for translation (By similarity).</text>
</comment>
<comment type="function">
    <molecule>Nuclear inclusion protein A</molecule>
    <text evidence="1">Has RNA-binding and proteolytic activities.</text>
</comment>
<comment type="function">
    <molecule>Nuclear inclusion protein B</molecule>
    <text>An RNA-dependent RNA polymerase that plays an essential role in the virus replication.</text>
</comment>
<comment type="catalytic activity">
    <reaction evidence="6">
        <text>RNA(n) + a ribonucleoside 5'-triphosphate = RNA(n+1) + diphosphate</text>
        <dbReference type="Rhea" id="RHEA:21248"/>
        <dbReference type="Rhea" id="RHEA-COMP:14527"/>
        <dbReference type="Rhea" id="RHEA-COMP:17342"/>
        <dbReference type="ChEBI" id="CHEBI:33019"/>
        <dbReference type="ChEBI" id="CHEBI:61557"/>
        <dbReference type="ChEBI" id="CHEBI:140395"/>
        <dbReference type="EC" id="2.7.7.48"/>
    </reaction>
</comment>
<comment type="catalytic activity">
    <reaction evidence="1">
        <text>Hydrolyzes glutaminyl bonds, and activity is further restricted by preferences for the amino acids in P6 - P1' that vary with the species of potyvirus, e.g. Glu-Xaa-Xaa-Tyr-Xaa-Gln-|-(Ser or Gly) for the enzyme from tobacco etch virus. The natural substrate is the viral polyprotein, but other proteins and oligopeptides containing the appropriate consensus sequence are also cleaved.</text>
        <dbReference type="EC" id="3.4.22.44"/>
    </reaction>
</comment>
<comment type="subcellular location">
    <molecule>6 kDa protein 1</molecule>
    <subcellularLocation>
        <location>Host cytoplasmic vesicle</location>
    </subcellularLocation>
    <text evidence="3">Probably colocalizes with 6K2-induced vesicles associated with host chloroplasts.</text>
</comment>
<comment type="subcellular location">
    <molecule>6 kDa protein 2</molecule>
    <subcellularLocation>
        <location evidence="2">Host cytoplasmic vesicle</location>
    </subcellularLocation>
    <text evidence="2">6K-induced vesicles associate with host chloroplasts.</text>
</comment>
<comment type="subcellular location">
    <molecule>Capsid protein</molecule>
    <subcellularLocation>
        <location evidence="11">Virion</location>
    </subcellularLocation>
</comment>
<comment type="PTM">
    <molecule>Viral genome-linked protein</molecule>
    <text evidence="2">VPg is uridylylated by the polymerase and is covalently attached to the 5'-end of the genomic RNA. This uridylylated form acts as a nucleotide-peptide primer for the polymerase (By similarity).</text>
</comment>
<comment type="PTM">
    <molecule>Genome polyprotein 1</molecule>
    <text evidence="11">The viral RNA1 of bymoviruses is expressed as a single polyprotein which undergoes post-translational proteolytic processing by the main proteinase NIa-pro resulting in the production of at least eight individual proteins.</text>
</comment>
<comment type="similarity">
    <text evidence="11">Belongs to the bymoviruses polyprotein 1 family.</text>
</comment>
<proteinExistence type="inferred from homology"/>
<feature type="chain" id="PRO_0000456245" description="Genome polyprotein 1">
    <location>
        <begin position="1"/>
        <end position="2410"/>
    </location>
</feature>
<feature type="chain" id="PRO_5000064773" description="Protein P3">
    <location>
        <begin position="1"/>
        <end position="328"/>
    </location>
</feature>
<feature type="chain" id="PRO_5000064774" description="6 kDa protein 1">
    <location>
        <begin position="329"/>
        <end position="394"/>
    </location>
</feature>
<feature type="chain" id="PRO_5000064775" description="Cytoplasmic inclusion protein">
    <location>
        <begin position="395"/>
        <end position="1053"/>
    </location>
</feature>
<feature type="chain" id="PRO_5000064776" description="6 kDa protein 2">
    <location>
        <begin position="1054"/>
        <end position="1175"/>
    </location>
</feature>
<feature type="chain" id="PRO_5000064777" description="Viral genome-linked protein">
    <location>
        <begin position="1176"/>
        <end position="1362"/>
    </location>
</feature>
<feature type="chain" id="PRO_5000064778" description="Nuclear inclusion protein A">
    <location>
        <begin position="1363"/>
        <end position="1586"/>
    </location>
</feature>
<feature type="chain" id="PRO_5000064779" description="Nuclear inclusion protein B">
    <location>
        <begin position="1587"/>
        <end position="2113"/>
    </location>
</feature>
<feature type="chain" id="PRO_5000064780" description="Capsid protein">
    <location>
        <begin position="2114"/>
        <end position="2410"/>
    </location>
</feature>
<feature type="domain" description="Helicase ATP-binding" evidence="7">
    <location>
        <begin position="474"/>
        <end position="632"/>
    </location>
</feature>
<feature type="domain" description="Helicase C-terminal" evidence="8">
    <location>
        <begin position="647"/>
        <end position="813"/>
    </location>
</feature>
<feature type="domain" description="Peptidase C4" evidence="9">
    <location>
        <begin position="1359"/>
        <end position="1573"/>
    </location>
</feature>
<feature type="domain" description="RdRp catalytic" evidence="6">
    <location>
        <begin position="1857"/>
        <end position="1980"/>
    </location>
</feature>
<feature type="region of interest" description="Disordered" evidence="10">
    <location>
        <begin position="1"/>
        <end position="21"/>
    </location>
</feature>
<feature type="region of interest" description="Disordered" evidence="10">
    <location>
        <begin position="2175"/>
        <end position="2200"/>
    </location>
</feature>
<feature type="short sequence motif" description="DEAH box">
    <location>
        <begin position="583"/>
        <end position="586"/>
    </location>
</feature>
<feature type="active site" description="For nuclear inclusion protein A activity" evidence="9">
    <location>
        <position position="1404"/>
    </location>
</feature>
<feature type="active site" description="For nuclear inclusion protein A activity" evidence="9">
    <location>
        <position position="1440"/>
    </location>
</feature>
<feature type="active site" description="For nuclear inclusion protein A activity" evidence="9">
    <location>
        <position position="1507"/>
    </location>
</feature>
<feature type="binding site" evidence="7">
    <location>
        <begin position="487"/>
        <end position="494"/>
    </location>
    <ligand>
        <name>ATP</name>
        <dbReference type="ChEBI" id="CHEBI:30616"/>
    </ligand>
</feature>
<feature type="site" description="Cleavage" evidence="5">
    <location>
        <begin position="328"/>
        <end position="329"/>
    </location>
</feature>
<feature type="site" description="Cleavage" evidence="5">
    <location>
        <begin position="394"/>
        <end position="395"/>
    </location>
</feature>
<feature type="site" description="Cleavage" evidence="5">
    <location>
        <begin position="1053"/>
        <end position="1054"/>
    </location>
</feature>
<feature type="site" description="Cleavage" evidence="5">
    <location>
        <begin position="1175"/>
        <end position="1176"/>
    </location>
</feature>
<feature type="site" description="Cleavage" evidence="5">
    <location>
        <begin position="1338"/>
        <end position="1339"/>
    </location>
</feature>
<feature type="site" description="Cleavage" evidence="5">
    <location>
        <begin position="1586"/>
        <end position="1587"/>
    </location>
</feature>
<feature type="site" description="Cleavage" evidence="5">
    <location>
        <begin position="2114"/>
        <end position="2115"/>
    </location>
</feature>
<feature type="modified residue" description="O-(5'-phospho-RNA)-tyrosine" evidence="2">
    <location>
        <position position="1234"/>
    </location>
</feature>
<evidence type="ECO:0000250" key="1">
    <source>
        <dbReference type="UniProtKB" id="P04517"/>
    </source>
</evidence>
<evidence type="ECO:0000250" key="2">
    <source>
        <dbReference type="UniProtKB" id="P09814"/>
    </source>
</evidence>
<evidence type="ECO:0000250" key="3">
    <source>
        <dbReference type="UniProtKB" id="P13529"/>
    </source>
</evidence>
<evidence type="ECO:0000250" key="4">
    <source>
        <dbReference type="UniProtKB" id="P18247"/>
    </source>
</evidence>
<evidence type="ECO:0000255" key="5"/>
<evidence type="ECO:0000255" key="6">
    <source>
        <dbReference type="PROSITE-ProRule" id="PRU00539"/>
    </source>
</evidence>
<evidence type="ECO:0000255" key="7">
    <source>
        <dbReference type="PROSITE-ProRule" id="PRU00541"/>
    </source>
</evidence>
<evidence type="ECO:0000255" key="8">
    <source>
        <dbReference type="PROSITE-ProRule" id="PRU00542"/>
    </source>
</evidence>
<evidence type="ECO:0000255" key="9">
    <source>
        <dbReference type="PROSITE-ProRule" id="PRU00766"/>
    </source>
</evidence>
<evidence type="ECO:0000256" key="10">
    <source>
        <dbReference type="SAM" id="MobiDB-lite"/>
    </source>
</evidence>
<evidence type="ECO:0000305" key="11"/>
<keyword id="KW-0067">ATP-binding</keyword>
<keyword id="KW-0167">Capsid protein</keyword>
<keyword id="KW-0191">Covalent protein-RNA linkage</keyword>
<keyword id="KW-1139">Helical capsid protein</keyword>
<keyword id="KW-0347">Helicase</keyword>
<keyword id="KW-1036">Host cytoplasmic vesicle</keyword>
<keyword id="KW-0378">Hydrolase</keyword>
<keyword id="KW-0547">Nucleotide-binding</keyword>
<keyword id="KW-0548">Nucleotidyltransferase</keyword>
<keyword id="KW-0597">Phosphoprotein</keyword>
<keyword id="KW-1185">Reference proteome</keyword>
<keyword id="KW-0696">RNA-directed RNA polymerase</keyword>
<keyword id="KW-0808">Transferase</keyword>
<keyword id="KW-0693">Viral RNA replication</keyword>
<keyword id="KW-0946">Virion</keyword>